<gene>
    <name evidence="1" type="primary">ruvA</name>
    <name type="ordered locus">XAC3149</name>
</gene>
<proteinExistence type="inferred from homology"/>
<comment type="function">
    <text evidence="1">The RuvA-RuvB-RuvC complex processes Holliday junction (HJ) DNA during genetic recombination and DNA repair, while the RuvA-RuvB complex plays an important role in the rescue of blocked DNA replication forks via replication fork reversal (RFR). RuvA specifically binds to HJ cruciform DNA, conferring on it an open structure. The RuvB hexamer acts as an ATP-dependent pump, pulling dsDNA into and through the RuvAB complex. HJ branch migration allows RuvC to scan DNA until it finds its consensus sequence, where it cleaves and resolves the cruciform DNA.</text>
</comment>
<comment type="subunit">
    <text evidence="1">Homotetramer. Forms an RuvA(8)-RuvB(12)-Holliday junction (HJ) complex. HJ DNA is sandwiched between 2 RuvA tetramers; dsDNA enters through RuvA and exits via RuvB. An RuvB hexamer assembles on each DNA strand where it exits the tetramer. Each RuvB hexamer is contacted by two RuvA subunits (via domain III) on 2 adjacent RuvB subunits; this complex drives branch migration. In the full resolvosome a probable DNA-RuvA(4)-RuvB(12)-RuvC(2) complex forms which resolves the HJ.</text>
</comment>
<comment type="subcellular location">
    <subcellularLocation>
        <location evidence="1">Cytoplasm</location>
    </subcellularLocation>
</comment>
<comment type="domain">
    <text evidence="1">Has three domains with a flexible linker between the domains II and III and assumes an 'L' shape. Domain III is highly mobile and contacts RuvB.</text>
</comment>
<comment type="similarity">
    <text evidence="1">Belongs to the RuvA family.</text>
</comment>
<keyword id="KW-0963">Cytoplasm</keyword>
<keyword id="KW-0227">DNA damage</keyword>
<keyword id="KW-0233">DNA recombination</keyword>
<keyword id="KW-0234">DNA repair</keyword>
<keyword id="KW-0238">DNA-binding</keyword>
<dbReference type="EMBL" id="AE008923">
    <property type="protein sequence ID" value="AAM37993.1"/>
    <property type="molecule type" value="Genomic_DNA"/>
</dbReference>
<dbReference type="RefSeq" id="WP_003482577.1">
    <property type="nucleotide sequence ID" value="NC_003919.1"/>
</dbReference>
<dbReference type="SMR" id="Q8PHV0"/>
<dbReference type="GeneID" id="66912214"/>
<dbReference type="KEGG" id="xac:XAC3149"/>
<dbReference type="eggNOG" id="COG0632">
    <property type="taxonomic scope" value="Bacteria"/>
</dbReference>
<dbReference type="HOGENOM" id="CLU_087936_0_0_6"/>
<dbReference type="Proteomes" id="UP000000576">
    <property type="component" value="Chromosome"/>
</dbReference>
<dbReference type="GO" id="GO:0005737">
    <property type="term" value="C:cytoplasm"/>
    <property type="evidence" value="ECO:0007669"/>
    <property type="project" value="UniProtKB-SubCell"/>
</dbReference>
<dbReference type="GO" id="GO:0009379">
    <property type="term" value="C:Holliday junction helicase complex"/>
    <property type="evidence" value="ECO:0007669"/>
    <property type="project" value="InterPro"/>
</dbReference>
<dbReference type="GO" id="GO:0048476">
    <property type="term" value="C:Holliday junction resolvase complex"/>
    <property type="evidence" value="ECO:0007669"/>
    <property type="project" value="UniProtKB-UniRule"/>
</dbReference>
<dbReference type="GO" id="GO:0005524">
    <property type="term" value="F:ATP binding"/>
    <property type="evidence" value="ECO:0007669"/>
    <property type="project" value="InterPro"/>
</dbReference>
<dbReference type="GO" id="GO:0000400">
    <property type="term" value="F:four-way junction DNA binding"/>
    <property type="evidence" value="ECO:0007669"/>
    <property type="project" value="UniProtKB-UniRule"/>
</dbReference>
<dbReference type="GO" id="GO:0009378">
    <property type="term" value="F:four-way junction helicase activity"/>
    <property type="evidence" value="ECO:0007669"/>
    <property type="project" value="InterPro"/>
</dbReference>
<dbReference type="GO" id="GO:0006310">
    <property type="term" value="P:DNA recombination"/>
    <property type="evidence" value="ECO:0007669"/>
    <property type="project" value="UniProtKB-UniRule"/>
</dbReference>
<dbReference type="GO" id="GO:0006281">
    <property type="term" value="P:DNA repair"/>
    <property type="evidence" value="ECO:0007669"/>
    <property type="project" value="UniProtKB-UniRule"/>
</dbReference>
<dbReference type="CDD" id="cd14332">
    <property type="entry name" value="UBA_RuvA_C"/>
    <property type="match status" value="1"/>
</dbReference>
<dbReference type="Gene3D" id="1.10.150.20">
    <property type="entry name" value="5' to 3' exonuclease, C-terminal subdomain"/>
    <property type="match status" value="1"/>
</dbReference>
<dbReference type="Gene3D" id="1.10.8.10">
    <property type="entry name" value="DNA helicase RuvA subunit, C-terminal domain"/>
    <property type="match status" value="1"/>
</dbReference>
<dbReference type="Gene3D" id="2.40.50.140">
    <property type="entry name" value="Nucleic acid-binding proteins"/>
    <property type="match status" value="1"/>
</dbReference>
<dbReference type="HAMAP" id="MF_00031">
    <property type="entry name" value="DNA_HJ_migration_RuvA"/>
    <property type="match status" value="1"/>
</dbReference>
<dbReference type="InterPro" id="IPR013849">
    <property type="entry name" value="DNA_helicase_Holl-junc_RuvA_I"/>
</dbReference>
<dbReference type="InterPro" id="IPR003583">
    <property type="entry name" value="Hlx-hairpin-Hlx_DNA-bd_motif"/>
</dbReference>
<dbReference type="InterPro" id="IPR012340">
    <property type="entry name" value="NA-bd_OB-fold"/>
</dbReference>
<dbReference type="InterPro" id="IPR000085">
    <property type="entry name" value="RuvA"/>
</dbReference>
<dbReference type="InterPro" id="IPR010994">
    <property type="entry name" value="RuvA_2-like"/>
</dbReference>
<dbReference type="InterPro" id="IPR011114">
    <property type="entry name" value="RuvA_C"/>
</dbReference>
<dbReference type="InterPro" id="IPR036267">
    <property type="entry name" value="RuvA_C_sf"/>
</dbReference>
<dbReference type="NCBIfam" id="TIGR00084">
    <property type="entry name" value="ruvA"/>
    <property type="match status" value="1"/>
</dbReference>
<dbReference type="Pfam" id="PF14520">
    <property type="entry name" value="HHH_5"/>
    <property type="match status" value="1"/>
</dbReference>
<dbReference type="Pfam" id="PF07499">
    <property type="entry name" value="RuvA_C"/>
    <property type="match status" value="1"/>
</dbReference>
<dbReference type="Pfam" id="PF01330">
    <property type="entry name" value="RuvA_N"/>
    <property type="match status" value="1"/>
</dbReference>
<dbReference type="SMART" id="SM00278">
    <property type="entry name" value="HhH1"/>
    <property type="match status" value="2"/>
</dbReference>
<dbReference type="SUPFAM" id="SSF46929">
    <property type="entry name" value="DNA helicase RuvA subunit, C-terminal domain"/>
    <property type="match status" value="1"/>
</dbReference>
<dbReference type="SUPFAM" id="SSF50249">
    <property type="entry name" value="Nucleic acid-binding proteins"/>
    <property type="match status" value="1"/>
</dbReference>
<dbReference type="SUPFAM" id="SSF47781">
    <property type="entry name" value="RuvA domain 2-like"/>
    <property type="match status" value="1"/>
</dbReference>
<feature type="chain" id="PRO_0000094712" description="Holliday junction branch migration complex subunit RuvA">
    <location>
        <begin position="1"/>
        <end position="194"/>
    </location>
</feature>
<feature type="region of interest" description="Domain I" evidence="1">
    <location>
        <begin position="1"/>
        <end position="64"/>
    </location>
</feature>
<feature type="region of interest" description="Domain II" evidence="1">
    <location>
        <begin position="65"/>
        <end position="140"/>
    </location>
</feature>
<feature type="region of interest" description="Flexible linker" evidence="1">
    <location>
        <begin position="140"/>
        <end position="144"/>
    </location>
</feature>
<feature type="region of interest" description="Domain III" evidence="1">
    <location>
        <begin position="145"/>
        <end position="194"/>
    </location>
</feature>
<protein>
    <recommendedName>
        <fullName evidence="1">Holliday junction branch migration complex subunit RuvA</fullName>
    </recommendedName>
</protein>
<sequence>MIGRLRGILAYKQPPWLVIDVGGVGYELEAPMSTFYDLPDVGRDVILFTHYAQKEDSVSLYGFLREGERRLFRDVQKVTGIGAKIALAVLSGVSVDEFARLITSGDITALTRIPGIGKKTAERMVVELRDRAADFSSGAPITGQLGPDAVSEATVALQQLGYKPAEAARMARDAGAEGDEVATVIRKALQAALR</sequence>
<name>RUVA_XANAC</name>
<accession>Q8PHV0</accession>
<evidence type="ECO:0000255" key="1">
    <source>
        <dbReference type="HAMAP-Rule" id="MF_00031"/>
    </source>
</evidence>
<organism>
    <name type="scientific">Xanthomonas axonopodis pv. citri (strain 306)</name>
    <dbReference type="NCBI Taxonomy" id="190486"/>
    <lineage>
        <taxon>Bacteria</taxon>
        <taxon>Pseudomonadati</taxon>
        <taxon>Pseudomonadota</taxon>
        <taxon>Gammaproteobacteria</taxon>
        <taxon>Lysobacterales</taxon>
        <taxon>Lysobacteraceae</taxon>
        <taxon>Xanthomonas</taxon>
    </lineage>
</organism>
<reference key="1">
    <citation type="journal article" date="2002" name="Nature">
        <title>Comparison of the genomes of two Xanthomonas pathogens with differing host specificities.</title>
        <authorList>
            <person name="da Silva A.C.R."/>
            <person name="Ferro J.A."/>
            <person name="Reinach F.C."/>
            <person name="Farah C.S."/>
            <person name="Furlan L.R."/>
            <person name="Quaggio R.B."/>
            <person name="Monteiro-Vitorello C.B."/>
            <person name="Van Sluys M.A."/>
            <person name="Almeida N.F. Jr."/>
            <person name="Alves L.M.C."/>
            <person name="do Amaral A.M."/>
            <person name="Bertolini M.C."/>
            <person name="Camargo L.E.A."/>
            <person name="Camarotte G."/>
            <person name="Cannavan F."/>
            <person name="Cardozo J."/>
            <person name="Chambergo F."/>
            <person name="Ciapina L.P."/>
            <person name="Cicarelli R.M.B."/>
            <person name="Coutinho L.L."/>
            <person name="Cursino-Santos J.R."/>
            <person name="El-Dorry H."/>
            <person name="Faria J.B."/>
            <person name="Ferreira A.J.S."/>
            <person name="Ferreira R.C.C."/>
            <person name="Ferro M.I.T."/>
            <person name="Formighieri E.F."/>
            <person name="Franco M.C."/>
            <person name="Greggio C.C."/>
            <person name="Gruber A."/>
            <person name="Katsuyama A.M."/>
            <person name="Kishi L.T."/>
            <person name="Leite R.P."/>
            <person name="Lemos E.G.M."/>
            <person name="Lemos M.V.F."/>
            <person name="Locali E.C."/>
            <person name="Machado M.A."/>
            <person name="Madeira A.M.B.N."/>
            <person name="Martinez-Rossi N.M."/>
            <person name="Martins E.C."/>
            <person name="Meidanis J."/>
            <person name="Menck C.F.M."/>
            <person name="Miyaki C.Y."/>
            <person name="Moon D.H."/>
            <person name="Moreira L.M."/>
            <person name="Novo M.T.M."/>
            <person name="Okura V.K."/>
            <person name="Oliveira M.C."/>
            <person name="Oliveira V.R."/>
            <person name="Pereira H.A."/>
            <person name="Rossi A."/>
            <person name="Sena J.A.D."/>
            <person name="Silva C."/>
            <person name="de Souza R.F."/>
            <person name="Spinola L.A.F."/>
            <person name="Takita M.A."/>
            <person name="Tamura R.E."/>
            <person name="Teixeira E.C."/>
            <person name="Tezza R.I.D."/>
            <person name="Trindade dos Santos M."/>
            <person name="Truffi D."/>
            <person name="Tsai S.M."/>
            <person name="White F.F."/>
            <person name="Setubal J.C."/>
            <person name="Kitajima J.P."/>
        </authorList>
    </citation>
    <scope>NUCLEOTIDE SEQUENCE [LARGE SCALE GENOMIC DNA]</scope>
    <source>
        <strain>306</strain>
    </source>
</reference>